<comment type="function">
    <text evidence="1 3">Component of the elongator complex, a multiprotein complex which is required for multiple tRNA modifications, including mcm5U (5-methoxycarbonylmethyl uridine), mcm5s2U (5-methoxycarbonylmethyl-2-thiouridine), and ncm5U (5-carbamoylmethyl uridine) (By similarity). The elongator complex catalyzes formation of carboxymethyluridine in the wobble base at position 34 in tRNAs (PubMed:29332244).</text>
</comment>
<comment type="pathway">
    <text evidence="3">tRNA modification; 5-methoxycarbonylmethyl-2-thiouridine-tRNA biosynthesis.</text>
</comment>
<comment type="subunit">
    <text evidence="1">Component of the elongator complex.</text>
</comment>
<comment type="subcellular location">
    <subcellularLocation>
        <location evidence="2">Cytoplasm</location>
    </subcellularLocation>
    <subcellularLocation>
        <location evidence="2">Nucleus</location>
    </subcellularLocation>
</comment>
<comment type="similarity">
    <text evidence="4">Belongs to the ELP5 family.</text>
</comment>
<comment type="caution">
    <text evidence="5">The elongator complex was originally thought to play a role in transcription elongation. However, it is no longer thought to play a direct role in this process and its primary function is thought to be in tRNA modification.</text>
</comment>
<protein>
    <recommendedName>
        <fullName>Elongator complex protein 5</fullName>
    </recommendedName>
    <alternativeName>
        <fullName>Protein iki1</fullName>
    </alternativeName>
</protein>
<gene>
    <name type="primary">iki1</name>
    <name type="synonym">elp5</name>
    <name type="ORF">SPBC18E5.05c</name>
</gene>
<keyword id="KW-0963">Cytoplasm</keyword>
<keyword id="KW-0539">Nucleus</keyword>
<keyword id="KW-1185">Reference proteome</keyword>
<keyword id="KW-0819">tRNA processing</keyword>
<feature type="chain" id="PRO_0000343152" description="Elongator complex protein 5">
    <location>
        <begin position="1"/>
        <end position="314"/>
    </location>
</feature>
<sequence length="314" mass="35704">MSKFLLNRCIRDLSPLTVLKDNLQQTAKPILNYYAKNAASRGIKVLFISYETLEKEAPEGIDCFLYATSWEKVKSLKELYEHISSWRTQGKQHIVMIDTINPILNTSISSFTMFFGSVLALGSICFLTSFHKDVTLENYPSYLPPCEVFLDFTSTCTVSLIGMQHLSVEHDAKMRSLPNPLLEELQDDKIISLLGSNCETAIVLHVEFRKKSGRIIKESCVLKNGKLEPYTPFEETARGPEPADNQIDFNVSFNLNVSEKERKERDKVFLPYFSAQMVGSQHKSSFVDEGTIIYHADEADDFDEEEDADEDLLI</sequence>
<reference key="1">
    <citation type="journal article" date="2002" name="Nature">
        <title>The genome sequence of Schizosaccharomyces pombe.</title>
        <authorList>
            <person name="Wood V."/>
            <person name="Gwilliam R."/>
            <person name="Rajandream M.A."/>
            <person name="Lyne M.H."/>
            <person name="Lyne R."/>
            <person name="Stewart A."/>
            <person name="Sgouros J.G."/>
            <person name="Peat N."/>
            <person name="Hayles J."/>
            <person name="Baker S.G."/>
            <person name="Basham D."/>
            <person name="Bowman S."/>
            <person name="Brooks K."/>
            <person name="Brown D."/>
            <person name="Brown S."/>
            <person name="Chillingworth T."/>
            <person name="Churcher C.M."/>
            <person name="Collins M."/>
            <person name="Connor R."/>
            <person name="Cronin A."/>
            <person name="Davis P."/>
            <person name="Feltwell T."/>
            <person name="Fraser A."/>
            <person name="Gentles S."/>
            <person name="Goble A."/>
            <person name="Hamlin N."/>
            <person name="Harris D.E."/>
            <person name="Hidalgo J."/>
            <person name="Hodgson G."/>
            <person name="Holroyd S."/>
            <person name="Hornsby T."/>
            <person name="Howarth S."/>
            <person name="Huckle E.J."/>
            <person name="Hunt S."/>
            <person name="Jagels K."/>
            <person name="James K.D."/>
            <person name="Jones L."/>
            <person name="Jones M."/>
            <person name="Leather S."/>
            <person name="McDonald S."/>
            <person name="McLean J."/>
            <person name="Mooney P."/>
            <person name="Moule S."/>
            <person name="Mungall K.L."/>
            <person name="Murphy L.D."/>
            <person name="Niblett D."/>
            <person name="Odell C."/>
            <person name="Oliver K."/>
            <person name="O'Neil S."/>
            <person name="Pearson D."/>
            <person name="Quail M.A."/>
            <person name="Rabbinowitsch E."/>
            <person name="Rutherford K.M."/>
            <person name="Rutter S."/>
            <person name="Saunders D."/>
            <person name="Seeger K."/>
            <person name="Sharp S."/>
            <person name="Skelton J."/>
            <person name="Simmonds M.N."/>
            <person name="Squares R."/>
            <person name="Squares S."/>
            <person name="Stevens K."/>
            <person name="Taylor K."/>
            <person name="Taylor R.G."/>
            <person name="Tivey A."/>
            <person name="Walsh S.V."/>
            <person name="Warren T."/>
            <person name="Whitehead S."/>
            <person name="Woodward J.R."/>
            <person name="Volckaert G."/>
            <person name="Aert R."/>
            <person name="Robben J."/>
            <person name="Grymonprez B."/>
            <person name="Weltjens I."/>
            <person name="Vanstreels E."/>
            <person name="Rieger M."/>
            <person name="Schaefer M."/>
            <person name="Mueller-Auer S."/>
            <person name="Gabel C."/>
            <person name="Fuchs M."/>
            <person name="Duesterhoeft A."/>
            <person name="Fritzc C."/>
            <person name="Holzer E."/>
            <person name="Moestl D."/>
            <person name="Hilbert H."/>
            <person name="Borzym K."/>
            <person name="Langer I."/>
            <person name="Beck A."/>
            <person name="Lehrach H."/>
            <person name="Reinhardt R."/>
            <person name="Pohl T.M."/>
            <person name="Eger P."/>
            <person name="Zimmermann W."/>
            <person name="Wedler H."/>
            <person name="Wambutt R."/>
            <person name="Purnelle B."/>
            <person name="Goffeau A."/>
            <person name="Cadieu E."/>
            <person name="Dreano S."/>
            <person name="Gloux S."/>
            <person name="Lelaure V."/>
            <person name="Mottier S."/>
            <person name="Galibert F."/>
            <person name="Aves S.J."/>
            <person name="Xiang Z."/>
            <person name="Hunt C."/>
            <person name="Moore K."/>
            <person name="Hurst S.M."/>
            <person name="Lucas M."/>
            <person name="Rochet M."/>
            <person name="Gaillardin C."/>
            <person name="Tallada V.A."/>
            <person name="Garzon A."/>
            <person name="Thode G."/>
            <person name="Daga R.R."/>
            <person name="Cruzado L."/>
            <person name="Jimenez J."/>
            <person name="Sanchez M."/>
            <person name="del Rey F."/>
            <person name="Benito J."/>
            <person name="Dominguez A."/>
            <person name="Revuelta J.L."/>
            <person name="Moreno S."/>
            <person name="Armstrong J."/>
            <person name="Forsburg S.L."/>
            <person name="Cerutti L."/>
            <person name="Lowe T."/>
            <person name="McCombie W.R."/>
            <person name="Paulsen I."/>
            <person name="Potashkin J."/>
            <person name="Shpakovski G.V."/>
            <person name="Ussery D."/>
            <person name="Barrell B.G."/>
            <person name="Nurse P."/>
        </authorList>
    </citation>
    <scope>NUCLEOTIDE SEQUENCE [LARGE SCALE GENOMIC DNA]</scope>
    <source>
        <strain>972 / ATCC 24843</strain>
    </source>
</reference>
<reference key="2">
    <citation type="journal article" date="2006" name="Nat. Biotechnol.">
        <title>ORFeome cloning and global analysis of protein localization in the fission yeast Schizosaccharomyces pombe.</title>
        <authorList>
            <person name="Matsuyama A."/>
            <person name="Arai R."/>
            <person name="Yashiroda Y."/>
            <person name="Shirai A."/>
            <person name="Kamata A."/>
            <person name="Sekido S."/>
            <person name="Kobayashi Y."/>
            <person name="Hashimoto A."/>
            <person name="Hamamoto M."/>
            <person name="Hiraoka Y."/>
            <person name="Horinouchi S."/>
            <person name="Yoshida M."/>
        </authorList>
    </citation>
    <scope>SUBCELLULAR LOCATION [LARGE SCALE ANALYSIS]</scope>
</reference>
<reference key="3">
    <citation type="journal article" date="2018" name="Cell. Mol. Life Sci.">
        <title>Structural insights into the function of Elongator.</title>
        <authorList>
            <person name="Dalwadi U."/>
            <person name="Yip C.K."/>
        </authorList>
    </citation>
    <scope>REVIEW</scope>
</reference>
<accession>O94495</accession>
<dbReference type="EMBL" id="CU329671">
    <property type="protein sequence ID" value="CAA22665.1"/>
    <property type="molecule type" value="Genomic_DNA"/>
</dbReference>
<dbReference type="PIR" id="T39756">
    <property type="entry name" value="T39756"/>
</dbReference>
<dbReference type="RefSeq" id="NP_595851.1">
    <property type="nucleotide sequence ID" value="NM_001021755.2"/>
</dbReference>
<dbReference type="SMR" id="O94495"/>
<dbReference type="BioGRID" id="277340">
    <property type="interactions" value="76"/>
</dbReference>
<dbReference type="ComplexPortal" id="CPX-25728">
    <property type="entry name" value="Elongator holoenzyme complex"/>
</dbReference>
<dbReference type="FunCoup" id="O94495">
    <property type="interactions" value="117"/>
</dbReference>
<dbReference type="STRING" id="284812.O94495"/>
<dbReference type="iPTMnet" id="O94495"/>
<dbReference type="PaxDb" id="4896-SPBC18E5.05c.1"/>
<dbReference type="EnsemblFungi" id="SPBC18E5.05c.1">
    <property type="protein sequence ID" value="SPBC18E5.05c.1:pep"/>
    <property type="gene ID" value="SPBC18E5.05c"/>
</dbReference>
<dbReference type="GeneID" id="2540822"/>
<dbReference type="KEGG" id="spo:2540822"/>
<dbReference type="PomBase" id="SPBC18E5.05c"/>
<dbReference type="VEuPathDB" id="FungiDB:SPBC18E5.05c"/>
<dbReference type="eggNOG" id="ENOG502QQIZ">
    <property type="taxonomic scope" value="Eukaryota"/>
</dbReference>
<dbReference type="HOGENOM" id="CLU_990979_0_0_1"/>
<dbReference type="InParanoid" id="O94495"/>
<dbReference type="OMA" id="WEPESTF"/>
<dbReference type="PhylomeDB" id="O94495"/>
<dbReference type="UniPathway" id="UPA00988"/>
<dbReference type="PRO" id="PR:O94495"/>
<dbReference type="Proteomes" id="UP000002485">
    <property type="component" value="Chromosome II"/>
</dbReference>
<dbReference type="GO" id="GO:0005829">
    <property type="term" value="C:cytosol"/>
    <property type="evidence" value="ECO:0007005"/>
    <property type="project" value="PomBase"/>
</dbReference>
<dbReference type="GO" id="GO:0033588">
    <property type="term" value="C:elongator holoenzyme complex"/>
    <property type="evidence" value="ECO:0000318"/>
    <property type="project" value="GO_Central"/>
</dbReference>
<dbReference type="GO" id="GO:0005634">
    <property type="term" value="C:nucleus"/>
    <property type="evidence" value="ECO:0007005"/>
    <property type="project" value="PomBase"/>
</dbReference>
<dbReference type="GO" id="GO:0006400">
    <property type="term" value="P:tRNA modification"/>
    <property type="evidence" value="ECO:0000318"/>
    <property type="project" value="GO_Central"/>
</dbReference>
<dbReference type="GO" id="GO:0002098">
    <property type="term" value="P:tRNA wobble uridine modification"/>
    <property type="evidence" value="ECO:0000266"/>
    <property type="project" value="PomBase"/>
</dbReference>
<dbReference type="CDD" id="cd19496">
    <property type="entry name" value="Elp5"/>
    <property type="match status" value="1"/>
</dbReference>
<dbReference type="Gene3D" id="3.40.50.300">
    <property type="entry name" value="P-loop containing nucleotide triphosphate hydrolases"/>
    <property type="match status" value="1"/>
</dbReference>
<dbReference type="InterPro" id="IPR019519">
    <property type="entry name" value="Elp5"/>
</dbReference>
<dbReference type="InterPro" id="IPR027417">
    <property type="entry name" value="P-loop_NTPase"/>
</dbReference>
<dbReference type="PANTHER" id="PTHR15641">
    <property type="entry name" value="ELONGATOR COMPLEX PROTEIN 5"/>
    <property type="match status" value="1"/>
</dbReference>
<dbReference type="PANTHER" id="PTHR15641:SF1">
    <property type="entry name" value="ELONGATOR COMPLEX PROTEIN 5"/>
    <property type="match status" value="1"/>
</dbReference>
<dbReference type="Pfam" id="PF10483">
    <property type="entry name" value="Elong_Iki1"/>
    <property type="match status" value="1"/>
</dbReference>
<organism>
    <name type="scientific">Schizosaccharomyces pombe (strain 972 / ATCC 24843)</name>
    <name type="common">Fission yeast</name>
    <dbReference type="NCBI Taxonomy" id="284812"/>
    <lineage>
        <taxon>Eukaryota</taxon>
        <taxon>Fungi</taxon>
        <taxon>Dikarya</taxon>
        <taxon>Ascomycota</taxon>
        <taxon>Taphrinomycotina</taxon>
        <taxon>Schizosaccharomycetes</taxon>
        <taxon>Schizosaccharomycetales</taxon>
        <taxon>Schizosaccharomycetaceae</taxon>
        <taxon>Schizosaccharomyces</taxon>
    </lineage>
</organism>
<evidence type="ECO:0000250" key="1">
    <source>
        <dbReference type="UniProtKB" id="P38874"/>
    </source>
</evidence>
<evidence type="ECO:0000269" key="2">
    <source>
    </source>
</evidence>
<evidence type="ECO:0000303" key="3">
    <source>
    </source>
</evidence>
<evidence type="ECO:0000305" key="4"/>
<evidence type="ECO:0000305" key="5">
    <source>
    </source>
</evidence>
<proteinExistence type="inferred from homology"/>
<name>ELP5_SCHPO</name>